<evidence type="ECO:0000250" key="1"/>
<evidence type="ECO:0000255" key="2"/>
<evidence type="ECO:0000256" key="3">
    <source>
        <dbReference type="SAM" id="MobiDB-lite"/>
    </source>
</evidence>
<evidence type="ECO:0000269" key="4">
    <source>
    </source>
</evidence>
<evidence type="ECO:0000305" key="5"/>
<organism>
    <name type="scientific">Schizosaccharomyces pombe (strain 972 / ATCC 24843)</name>
    <name type="common">Fission yeast</name>
    <dbReference type="NCBI Taxonomy" id="284812"/>
    <lineage>
        <taxon>Eukaryota</taxon>
        <taxon>Fungi</taxon>
        <taxon>Dikarya</taxon>
        <taxon>Ascomycota</taxon>
        <taxon>Taphrinomycotina</taxon>
        <taxon>Schizosaccharomycetes</taxon>
        <taxon>Schizosaccharomycetales</taxon>
        <taxon>Schizosaccharomycetaceae</taxon>
        <taxon>Schizosaccharomyces</taxon>
    </lineage>
</organism>
<protein>
    <recommendedName>
        <fullName>26S proteasome regulatory subunit 7 homolog</fullName>
    </recommendedName>
</protein>
<dbReference type="EMBL" id="CU329671">
    <property type="protein sequence ID" value="CAA16915.2"/>
    <property type="molecule type" value="Genomic_DNA"/>
</dbReference>
<dbReference type="PIR" id="T39558">
    <property type="entry name" value="T39558"/>
</dbReference>
<dbReference type="RefSeq" id="NP_596805.1">
    <property type="nucleotide sequence ID" value="NM_001023826.2"/>
</dbReference>
<dbReference type="SMR" id="O42931"/>
<dbReference type="BioGRID" id="276409">
    <property type="interactions" value="21"/>
</dbReference>
<dbReference type="ComplexPortal" id="CPX-9077">
    <property type="entry name" value="26S proteasome complex"/>
</dbReference>
<dbReference type="FunCoup" id="O42931">
    <property type="interactions" value="615"/>
</dbReference>
<dbReference type="IntAct" id="O42931">
    <property type="interactions" value="1"/>
</dbReference>
<dbReference type="STRING" id="284812.O42931"/>
<dbReference type="iPTMnet" id="O42931"/>
<dbReference type="PaxDb" id="4896-SPBC16C6.07c.1"/>
<dbReference type="EnsemblFungi" id="SPBC16C6.07c.1">
    <property type="protein sequence ID" value="SPBC16C6.07c.1:pep"/>
    <property type="gene ID" value="SPBC16C6.07c"/>
</dbReference>
<dbReference type="GeneID" id="2539862"/>
<dbReference type="KEGG" id="spo:2539862"/>
<dbReference type="PomBase" id="SPBC16C6.07c">
    <property type="gene designation" value="rpt1"/>
</dbReference>
<dbReference type="VEuPathDB" id="FungiDB:SPBC16C6.07c"/>
<dbReference type="eggNOG" id="KOG0729">
    <property type="taxonomic scope" value="Eukaryota"/>
</dbReference>
<dbReference type="HOGENOM" id="CLU_000688_6_2_1"/>
<dbReference type="InParanoid" id="O42931"/>
<dbReference type="OMA" id="RSKYHIE"/>
<dbReference type="PhylomeDB" id="O42931"/>
<dbReference type="Reactome" id="R-SPO-1236978">
    <property type="pathway name" value="Cross-presentation of soluble exogenous antigens (endosomes)"/>
</dbReference>
<dbReference type="Reactome" id="R-SPO-350562">
    <property type="pathway name" value="Regulation of ornithine decarboxylase (ODC)"/>
</dbReference>
<dbReference type="Reactome" id="R-SPO-5687128">
    <property type="pathway name" value="MAPK6/MAPK4 signaling"/>
</dbReference>
<dbReference type="Reactome" id="R-SPO-5689603">
    <property type="pathway name" value="UCH proteinases"/>
</dbReference>
<dbReference type="Reactome" id="R-SPO-5689880">
    <property type="pathway name" value="Ub-specific processing proteases"/>
</dbReference>
<dbReference type="Reactome" id="R-SPO-6798695">
    <property type="pathway name" value="Neutrophil degranulation"/>
</dbReference>
<dbReference type="Reactome" id="R-SPO-68949">
    <property type="pathway name" value="Orc1 removal from chromatin"/>
</dbReference>
<dbReference type="Reactome" id="R-SPO-69017">
    <property type="pathway name" value="CDK-mediated phosphorylation and removal of Cdc6"/>
</dbReference>
<dbReference type="Reactome" id="R-SPO-69601">
    <property type="pathway name" value="Ubiquitin Mediated Degradation of Phosphorylated Cdc25A"/>
</dbReference>
<dbReference type="Reactome" id="R-SPO-75815">
    <property type="pathway name" value="Ubiquitin-dependent degradation of Cyclin D"/>
</dbReference>
<dbReference type="Reactome" id="R-SPO-8854050">
    <property type="pathway name" value="FBXL7 down-regulates AURKA during mitotic entry and in early mitosis"/>
</dbReference>
<dbReference type="Reactome" id="R-SPO-8948751">
    <property type="pathway name" value="Regulation of PTEN stability and activity"/>
</dbReference>
<dbReference type="Reactome" id="R-SPO-8951664">
    <property type="pathway name" value="Neddylation"/>
</dbReference>
<dbReference type="Reactome" id="R-SPO-9755511">
    <property type="pathway name" value="KEAP1-NFE2L2 pathway"/>
</dbReference>
<dbReference type="Reactome" id="R-SPO-983168">
    <property type="pathway name" value="Antigen processing: Ubiquitination &amp; Proteasome degradation"/>
</dbReference>
<dbReference type="Reactome" id="R-SPO-9907900">
    <property type="pathway name" value="Proteasome assembly"/>
</dbReference>
<dbReference type="PRO" id="PR:O42931"/>
<dbReference type="Proteomes" id="UP000002485">
    <property type="component" value="Chromosome II"/>
</dbReference>
<dbReference type="GO" id="GO:0005829">
    <property type="term" value="C:cytosol"/>
    <property type="evidence" value="ECO:0007005"/>
    <property type="project" value="PomBase"/>
</dbReference>
<dbReference type="GO" id="GO:0005634">
    <property type="term" value="C:nucleus"/>
    <property type="evidence" value="ECO:0007005"/>
    <property type="project" value="PomBase"/>
</dbReference>
<dbReference type="GO" id="GO:0008540">
    <property type="term" value="C:proteasome regulatory particle, base subcomplex"/>
    <property type="evidence" value="ECO:0000314"/>
    <property type="project" value="PomBase"/>
</dbReference>
<dbReference type="GO" id="GO:0005524">
    <property type="term" value="F:ATP binding"/>
    <property type="evidence" value="ECO:0000255"/>
    <property type="project" value="PomBase"/>
</dbReference>
<dbReference type="GO" id="GO:0016887">
    <property type="term" value="F:ATP hydrolysis activity"/>
    <property type="evidence" value="ECO:0000303"/>
    <property type="project" value="PomBase"/>
</dbReference>
<dbReference type="GO" id="GO:0036402">
    <property type="term" value="F:proteasome-activating activity"/>
    <property type="evidence" value="ECO:0000318"/>
    <property type="project" value="GO_Central"/>
</dbReference>
<dbReference type="GO" id="GO:0043161">
    <property type="term" value="P:proteasome-mediated ubiquitin-dependent protein catabolic process"/>
    <property type="evidence" value="ECO:0000318"/>
    <property type="project" value="GO_Central"/>
</dbReference>
<dbReference type="CDD" id="cd19502">
    <property type="entry name" value="RecA-like_PAN_like"/>
    <property type="match status" value="1"/>
</dbReference>
<dbReference type="FunFam" id="1.10.8.60:FF:000005">
    <property type="entry name" value="26S protease regulatory subunit 7"/>
    <property type="match status" value="1"/>
</dbReference>
<dbReference type="FunFam" id="2.40.50.140:FF:000037">
    <property type="entry name" value="26S protease regulatory subunit 7"/>
    <property type="match status" value="1"/>
</dbReference>
<dbReference type="FunFam" id="3.40.50.300:FF:000027">
    <property type="entry name" value="26S protease regulatory subunit 7"/>
    <property type="match status" value="1"/>
</dbReference>
<dbReference type="Gene3D" id="1.10.8.60">
    <property type="match status" value="1"/>
</dbReference>
<dbReference type="Gene3D" id="2.40.50.140">
    <property type="entry name" value="Nucleic acid-binding proteins"/>
    <property type="match status" value="1"/>
</dbReference>
<dbReference type="Gene3D" id="3.40.50.300">
    <property type="entry name" value="P-loop containing nucleotide triphosphate hydrolases"/>
    <property type="match status" value="1"/>
</dbReference>
<dbReference type="InterPro" id="IPR050221">
    <property type="entry name" value="26S_Proteasome_ATPase"/>
</dbReference>
<dbReference type="InterPro" id="IPR003593">
    <property type="entry name" value="AAA+_ATPase"/>
</dbReference>
<dbReference type="InterPro" id="IPR041569">
    <property type="entry name" value="AAA_lid_3"/>
</dbReference>
<dbReference type="InterPro" id="IPR003959">
    <property type="entry name" value="ATPase_AAA_core"/>
</dbReference>
<dbReference type="InterPro" id="IPR003960">
    <property type="entry name" value="ATPase_AAA_CS"/>
</dbReference>
<dbReference type="InterPro" id="IPR012340">
    <property type="entry name" value="NA-bd_OB-fold"/>
</dbReference>
<dbReference type="InterPro" id="IPR027417">
    <property type="entry name" value="P-loop_NTPase"/>
</dbReference>
<dbReference type="InterPro" id="IPR048723">
    <property type="entry name" value="PRS7-like_OB"/>
</dbReference>
<dbReference type="PANTHER" id="PTHR23073">
    <property type="entry name" value="26S PROTEASOME REGULATORY SUBUNIT"/>
    <property type="match status" value="1"/>
</dbReference>
<dbReference type="Pfam" id="PF00004">
    <property type="entry name" value="AAA"/>
    <property type="match status" value="1"/>
</dbReference>
<dbReference type="Pfam" id="PF17862">
    <property type="entry name" value="AAA_lid_3"/>
    <property type="match status" value="1"/>
</dbReference>
<dbReference type="Pfam" id="PF21236">
    <property type="entry name" value="PRS7_OB"/>
    <property type="match status" value="1"/>
</dbReference>
<dbReference type="SMART" id="SM00382">
    <property type="entry name" value="AAA"/>
    <property type="match status" value="1"/>
</dbReference>
<dbReference type="SUPFAM" id="SSF52540">
    <property type="entry name" value="P-loop containing nucleoside triphosphate hydrolases"/>
    <property type="match status" value="1"/>
</dbReference>
<dbReference type="PROSITE" id="PS00674">
    <property type="entry name" value="AAA"/>
    <property type="match status" value="1"/>
</dbReference>
<reference key="1">
    <citation type="journal article" date="2002" name="Nature">
        <title>The genome sequence of Schizosaccharomyces pombe.</title>
        <authorList>
            <person name="Wood V."/>
            <person name="Gwilliam R."/>
            <person name="Rajandream M.A."/>
            <person name="Lyne M.H."/>
            <person name="Lyne R."/>
            <person name="Stewart A."/>
            <person name="Sgouros J.G."/>
            <person name="Peat N."/>
            <person name="Hayles J."/>
            <person name="Baker S.G."/>
            <person name="Basham D."/>
            <person name="Bowman S."/>
            <person name="Brooks K."/>
            <person name="Brown D."/>
            <person name="Brown S."/>
            <person name="Chillingworth T."/>
            <person name="Churcher C.M."/>
            <person name="Collins M."/>
            <person name="Connor R."/>
            <person name="Cronin A."/>
            <person name="Davis P."/>
            <person name="Feltwell T."/>
            <person name="Fraser A."/>
            <person name="Gentles S."/>
            <person name="Goble A."/>
            <person name="Hamlin N."/>
            <person name="Harris D.E."/>
            <person name="Hidalgo J."/>
            <person name="Hodgson G."/>
            <person name="Holroyd S."/>
            <person name="Hornsby T."/>
            <person name="Howarth S."/>
            <person name="Huckle E.J."/>
            <person name="Hunt S."/>
            <person name="Jagels K."/>
            <person name="James K.D."/>
            <person name="Jones L."/>
            <person name="Jones M."/>
            <person name="Leather S."/>
            <person name="McDonald S."/>
            <person name="McLean J."/>
            <person name="Mooney P."/>
            <person name="Moule S."/>
            <person name="Mungall K.L."/>
            <person name="Murphy L.D."/>
            <person name="Niblett D."/>
            <person name="Odell C."/>
            <person name="Oliver K."/>
            <person name="O'Neil S."/>
            <person name="Pearson D."/>
            <person name="Quail M.A."/>
            <person name="Rabbinowitsch E."/>
            <person name="Rutherford K.M."/>
            <person name="Rutter S."/>
            <person name="Saunders D."/>
            <person name="Seeger K."/>
            <person name="Sharp S."/>
            <person name="Skelton J."/>
            <person name="Simmonds M.N."/>
            <person name="Squares R."/>
            <person name="Squares S."/>
            <person name="Stevens K."/>
            <person name="Taylor K."/>
            <person name="Taylor R.G."/>
            <person name="Tivey A."/>
            <person name="Walsh S.V."/>
            <person name="Warren T."/>
            <person name="Whitehead S."/>
            <person name="Woodward J.R."/>
            <person name="Volckaert G."/>
            <person name="Aert R."/>
            <person name="Robben J."/>
            <person name="Grymonprez B."/>
            <person name="Weltjens I."/>
            <person name="Vanstreels E."/>
            <person name="Rieger M."/>
            <person name="Schaefer M."/>
            <person name="Mueller-Auer S."/>
            <person name="Gabel C."/>
            <person name="Fuchs M."/>
            <person name="Duesterhoeft A."/>
            <person name="Fritzc C."/>
            <person name="Holzer E."/>
            <person name="Moestl D."/>
            <person name="Hilbert H."/>
            <person name="Borzym K."/>
            <person name="Langer I."/>
            <person name="Beck A."/>
            <person name="Lehrach H."/>
            <person name="Reinhardt R."/>
            <person name="Pohl T.M."/>
            <person name="Eger P."/>
            <person name="Zimmermann W."/>
            <person name="Wedler H."/>
            <person name="Wambutt R."/>
            <person name="Purnelle B."/>
            <person name="Goffeau A."/>
            <person name="Cadieu E."/>
            <person name="Dreano S."/>
            <person name="Gloux S."/>
            <person name="Lelaure V."/>
            <person name="Mottier S."/>
            <person name="Galibert F."/>
            <person name="Aves S.J."/>
            <person name="Xiang Z."/>
            <person name="Hunt C."/>
            <person name="Moore K."/>
            <person name="Hurst S.M."/>
            <person name="Lucas M."/>
            <person name="Rochet M."/>
            <person name="Gaillardin C."/>
            <person name="Tallada V.A."/>
            <person name="Garzon A."/>
            <person name="Thode G."/>
            <person name="Daga R.R."/>
            <person name="Cruzado L."/>
            <person name="Jimenez J."/>
            <person name="Sanchez M."/>
            <person name="del Rey F."/>
            <person name="Benito J."/>
            <person name="Dominguez A."/>
            <person name="Revuelta J.L."/>
            <person name="Moreno S."/>
            <person name="Armstrong J."/>
            <person name="Forsburg S.L."/>
            <person name="Cerutti L."/>
            <person name="Lowe T."/>
            <person name="McCombie W.R."/>
            <person name="Paulsen I."/>
            <person name="Potashkin J."/>
            <person name="Shpakovski G.V."/>
            <person name="Ussery D."/>
            <person name="Barrell B.G."/>
            <person name="Nurse P."/>
        </authorList>
    </citation>
    <scope>NUCLEOTIDE SEQUENCE [LARGE SCALE GENOMIC DNA]</scope>
    <source>
        <strain>972 / ATCC 24843</strain>
    </source>
</reference>
<reference key="2">
    <citation type="journal article" date="2008" name="J. Proteome Res.">
        <title>Phosphoproteome analysis of fission yeast.</title>
        <authorList>
            <person name="Wilson-Grady J.T."/>
            <person name="Villen J."/>
            <person name="Gygi S.P."/>
        </authorList>
    </citation>
    <scope>PHOSPHORYLATION [LARGE SCALE ANALYSIS] AT SER-90</scope>
    <scope>IDENTIFICATION BY MASS SPECTROMETRY</scope>
</reference>
<accession>O42931</accession>
<name>PRS7_SCHPO</name>
<feature type="chain" id="PRO_0000084718" description="26S proteasome regulatory subunit 7 homolog">
    <location>
        <begin position="1"/>
        <end position="438"/>
    </location>
</feature>
<feature type="region of interest" description="Disordered" evidence="3">
    <location>
        <begin position="1"/>
        <end position="31"/>
    </location>
</feature>
<feature type="compositionally biased region" description="Basic and acidic residues" evidence="3">
    <location>
        <begin position="1"/>
        <end position="15"/>
    </location>
</feature>
<feature type="binding site" evidence="2">
    <location>
        <begin position="220"/>
        <end position="227"/>
    </location>
    <ligand>
        <name>ATP</name>
        <dbReference type="ChEBI" id="CHEBI:30616"/>
    </ligand>
</feature>
<feature type="modified residue" description="Phosphoserine" evidence="4">
    <location>
        <position position="90"/>
    </location>
</feature>
<proteinExistence type="evidence at protein level"/>
<keyword id="KW-0067">ATP-binding</keyword>
<keyword id="KW-0963">Cytoplasm</keyword>
<keyword id="KW-0547">Nucleotide-binding</keyword>
<keyword id="KW-0539">Nucleus</keyword>
<keyword id="KW-0597">Phosphoprotein</keyword>
<keyword id="KW-0647">Proteasome</keyword>
<keyword id="KW-1185">Reference proteome</keyword>
<gene>
    <name type="primary">rpt1</name>
    <name type="ORF">SPBC16C6.07c</name>
</gene>
<sequence length="438" mass="48965">MPPKEDWEKYQKPVDTEEENDKNPPPLDEGDIELLKSYATGPYARELAAIKEDTEAVLKRINDTVGIKESDTGLAPISFWDVAADRQRMSEEQPLQVARCTKIIENEQSAEKNAYVINLKQIAKFVVSLGERVSPTDIEEGMRVGCDRNKYAIQLPLPPKIDPSVTMMQVEEKPDVTYGDVGGCKEQIERLREVVELPLLSPERFVKLGIDPPKGIMLYGPPGTGKTLCARAVANRTDATFIRVIGSELVQKYVGEGARMVRELFEMARTKKACIIFFDEIDAIGGARFDDGAGGDNEVQRTMLELITQLDGFDPRGNIKVLFATNRPNTLDEALMRPGRIDRKVEFGLPDLEGRAHILRIHAKSMAIDKDIRWELIARLCPSQTGAELRSVCTEAGMFAIRARRRVATEKDFLDAVQKVVKGNQKFSSTADYMNMSS</sequence>
<comment type="function">
    <text evidence="1">The 26S proteasome is involved in the ATP-dependent degradation of ubiquitinated proteins. The regulatory (or ATPase) complex confers ATP dependency and substrate specificity to the 26S complex (By similarity).</text>
</comment>
<comment type="subcellular location">
    <subcellularLocation>
        <location evidence="5">Cytoplasm</location>
    </subcellularLocation>
    <subcellularLocation>
        <location evidence="5">Nucleus</location>
    </subcellularLocation>
</comment>
<comment type="similarity">
    <text evidence="5">Belongs to the AAA ATPase family.</text>
</comment>